<gene>
    <name evidence="1" type="primary">nrdR</name>
    <name type="ordered locus">BTH_I1380</name>
</gene>
<organism>
    <name type="scientific">Burkholderia thailandensis (strain ATCC 700388 / DSM 13276 / CCUG 48851 / CIP 106301 / E264)</name>
    <dbReference type="NCBI Taxonomy" id="271848"/>
    <lineage>
        <taxon>Bacteria</taxon>
        <taxon>Pseudomonadati</taxon>
        <taxon>Pseudomonadota</taxon>
        <taxon>Betaproteobacteria</taxon>
        <taxon>Burkholderiales</taxon>
        <taxon>Burkholderiaceae</taxon>
        <taxon>Burkholderia</taxon>
        <taxon>pseudomallei group</taxon>
    </lineage>
</organism>
<accession>Q2SYS3</accession>
<evidence type="ECO:0000255" key="1">
    <source>
        <dbReference type="HAMAP-Rule" id="MF_00440"/>
    </source>
</evidence>
<keyword id="KW-0067">ATP-binding</keyword>
<keyword id="KW-0238">DNA-binding</keyword>
<keyword id="KW-0479">Metal-binding</keyword>
<keyword id="KW-0547">Nucleotide-binding</keyword>
<keyword id="KW-0678">Repressor</keyword>
<keyword id="KW-0804">Transcription</keyword>
<keyword id="KW-0805">Transcription regulation</keyword>
<keyword id="KW-0862">Zinc</keyword>
<keyword id="KW-0863">Zinc-finger</keyword>
<proteinExistence type="inferred from homology"/>
<sequence>MRCPFCRHDDTQVVDSRVSEDGAAIRRRRRCSACDKRFTTYERVELALPAVVKKDGSRTEFDRRKIVASMKLALRKRPVAADAIDAAVARIEYQLLASGEREVRSEKLGELVMNELRQLDTIAYVRFASVYRRFEDVSEFADVIEEFRRAAPAKPPRKR</sequence>
<dbReference type="EMBL" id="CP000086">
    <property type="protein sequence ID" value="ABC36764.1"/>
    <property type="molecule type" value="Genomic_DNA"/>
</dbReference>
<dbReference type="RefSeq" id="WP_009889383.1">
    <property type="nucleotide sequence ID" value="NZ_CP008785.1"/>
</dbReference>
<dbReference type="SMR" id="Q2SYS3"/>
<dbReference type="GeneID" id="45121123"/>
<dbReference type="KEGG" id="bte:BTH_I1380"/>
<dbReference type="HOGENOM" id="CLU_108412_0_0_4"/>
<dbReference type="Proteomes" id="UP000001930">
    <property type="component" value="Chromosome I"/>
</dbReference>
<dbReference type="GO" id="GO:0005524">
    <property type="term" value="F:ATP binding"/>
    <property type="evidence" value="ECO:0007669"/>
    <property type="project" value="UniProtKB-KW"/>
</dbReference>
<dbReference type="GO" id="GO:0003677">
    <property type="term" value="F:DNA binding"/>
    <property type="evidence" value="ECO:0007669"/>
    <property type="project" value="UniProtKB-KW"/>
</dbReference>
<dbReference type="GO" id="GO:0008270">
    <property type="term" value="F:zinc ion binding"/>
    <property type="evidence" value="ECO:0007669"/>
    <property type="project" value="UniProtKB-UniRule"/>
</dbReference>
<dbReference type="GO" id="GO:0045892">
    <property type="term" value="P:negative regulation of DNA-templated transcription"/>
    <property type="evidence" value="ECO:0007669"/>
    <property type="project" value="UniProtKB-UniRule"/>
</dbReference>
<dbReference type="HAMAP" id="MF_00440">
    <property type="entry name" value="NrdR"/>
    <property type="match status" value="1"/>
</dbReference>
<dbReference type="InterPro" id="IPR005144">
    <property type="entry name" value="ATP-cone_dom"/>
</dbReference>
<dbReference type="InterPro" id="IPR055173">
    <property type="entry name" value="NrdR-like_N"/>
</dbReference>
<dbReference type="InterPro" id="IPR003796">
    <property type="entry name" value="RNR_NrdR-like"/>
</dbReference>
<dbReference type="NCBIfam" id="TIGR00244">
    <property type="entry name" value="transcriptional regulator NrdR"/>
    <property type="match status" value="1"/>
</dbReference>
<dbReference type="PANTHER" id="PTHR30455">
    <property type="entry name" value="TRANSCRIPTIONAL REPRESSOR NRDR"/>
    <property type="match status" value="1"/>
</dbReference>
<dbReference type="PANTHER" id="PTHR30455:SF2">
    <property type="entry name" value="TRANSCRIPTIONAL REPRESSOR NRDR"/>
    <property type="match status" value="1"/>
</dbReference>
<dbReference type="Pfam" id="PF03477">
    <property type="entry name" value="ATP-cone"/>
    <property type="match status" value="1"/>
</dbReference>
<dbReference type="Pfam" id="PF22811">
    <property type="entry name" value="Zn_ribbon_NrdR"/>
    <property type="match status" value="1"/>
</dbReference>
<dbReference type="PROSITE" id="PS51161">
    <property type="entry name" value="ATP_CONE"/>
    <property type="match status" value="1"/>
</dbReference>
<feature type="chain" id="PRO_0000264164" description="Transcriptional repressor NrdR">
    <location>
        <begin position="1"/>
        <end position="159"/>
    </location>
</feature>
<feature type="domain" description="ATP-cone" evidence="1">
    <location>
        <begin position="49"/>
        <end position="139"/>
    </location>
</feature>
<feature type="zinc finger region" evidence="1">
    <location>
        <begin position="3"/>
        <end position="34"/>
    </location>
</feature>
<reference key="1">
    <citation type="journal article" date="2005" name="BMC Genomics">
        <title>Bacterial genome adaptation to niches: divergence of the potential virulence genes in three Burkholderia species of different survival strategies.</title>
        <authorList>
            <person name="Kim H.S."/>
            <person name="Schell M.A."/>
            <person name="Yu Y."/>
            <person name="Ulrich R.L."/>
            <person name="Sarria S.H."/>
            <person name="Nierman W.C."/>
            <person name="DeShazer D."/>
        </authorList>
    </citation>
    <scope>NUCLEOTIDE SEQUENCE [LARGE SCALE GENOMIC DNA]</scope>
    <source>
        <strain>ATCC 700388 / DSM 13276 / CCUG 48851 / CIP 106301 / E264</strain>
    </source>
</reference>
<protein>
    <recommendedName>
        <fullName evidence="1">Transcriptional repressor NrdR</fullName>
    </recommendedName>
</protein>
<name>NRDR_BURTA</name>
<comment type="function">
    <text evidence="1">Negatively regulates transcription of bacterial ribonucleotide reductase nrd genes and operons by binding to NrdR-boxes.</text>
</comment>
<comment type="cofactor">
    <cofactor evidence="1">
        <name>Zn(2+)</name>
        <dbReference type="ChEBI" id="CHEBI:29105"/>
    </cofactor>
    <text evidence="1">Binds 1 zinc ion.</text>
</comment>
<comment type="similarity">
    <text evidence="1">Belongs to the NrdR family.</text>
</comment>